<dbReference type="EMBL" id="CU329670">
    <property type="protein sequence ID" value="CAA93591.1"/>
    <property type="molecule type" value="Genomic_DNA"/>
</dbReference>
<dbReference type="EMBL" id="AB027925">
    <property type="protein sequence ID" value="BAA87229.1"/>
    <property type="molecule type" value="Genomic_DNA"/>
</dbReference>
<dbReference type="PIR" id="S67432">
    <property type="entry name" value="S67432"/>
</dbReference>
<dbReference type="RefSeq" id="NP_593705.1">
    <property type="nucleotide sequence ID" value="NM_001019136.2"/>
</dbReference>
<dbReference type="SMR" id="Q10267"/>
<dbReference type="BioGRID" id="279352">
    <property type="interactions" value="26"/>
</dbReference>
<dbReference type="FunCoup" id="Q10267">
    <property type="interactions" value="100"/>
</dbReference>
<dbReference type="STRING" id="284812.Q10267"/>
<dbReference type="PaxDb" id="4896-SPAC13G7.03.1"/>
<dbReference type="EnsemblFungi" id="SPAC13G7.03.1">
    <property type="protein sequence ID" value="SPAC13G7.03.1:pep"/>
    <property type="gene ID" value="SPAC13G7.03"/>
</dbReference>
<dbReference type="GeneID" id="2542908"/>
<dbReference type="KEGG" id="spo:2542908"/>
<dbReference type="PomBase" id="SPAC13G7.03">
    <property type="gene designation" value="upf3"/>
</dbReference>
<dbReference type="VEuPathDB" id="FungiDB:SPAC13G7.03"/>
<dbReference type="eggNOG" id="KOG1295">
    <property type="taxonomic scope" value="Eukaryota"/>
</dbReference>
<dbReference type="HOGENOM" id="CLU_1001698_0_0_1"/>
<dbReference type="InParanoid" id="Q10267"/>
<dbReference type="OMA" id="FINWHRY"/>
<dbReference type="PhylomeDB" id="Q10267"/>
<dbReference type="Reactome" id="R-SPO-159236">
    <property type="pathway name" value="Transport of Mature mRNA derived from an Intron-Containing Transcript"/>
</dbReference>
<dbReference type="Reactome" id="R-SPO-72163">
    <property type="pathway name" value="mRNA Splicing - Major Pathway"/>
</dbReference>
<dbReference type="Reactome" id="R-SPO-975957">
    <property type="pathway name" value="Nonsense Mediated Decay (NMD) enhanced by the Exon Junction Complex (EJC)"/>
</dbReference>
<dbReference type="PRO" id="PR:Q10267"/>
<dbReference type="Proteomes" id="UP000002485">
    <property type="component" value="Chromosome I"/>
</dbReference>
<dbReference type="GO" id="GO:0005737">
    <property type="term" value="C:cytoplasm"/>
    <property type="evidence" value="ECO:0000318"/>
    <property type="project" value="GO_Central"/>
</dbReference>
<dbReference type="GO" id="GO:0005730">
    <property type="term" value="C:nucleolus"/>
    <property type="evidence" value="ECO:0007005"/>
    <property type="project" value="PomBase"/>
</dbReference>
<dbReference type="GO" id="GO:0003729">
    <property type="term" value="F:mRNA binding"/>
    <property type="evidence" value="ECO:0000318"/>
    <property type="project" value="GO_Central"/>
</dbReference>
<dbReference type="GO" id="GO:0070478">
    <property type="term" value="P:nuclear-transcribed mRNA catabolic process, 3'-5' exonucleolytic nonsense-mediated decay"/>
    <property type="evidence" value="ECO:0000266"/>
    <property type="project" value="PomBase"/>
</dbReference>
<dbReference type="GO" id="GO:0000184">
    <property type="term" value="P:nuclear-transcribed mRNA catabolic process, nonsense-mediated decay"/>
    <property type="evidence" value="ECO:0000318"/>
    <property type="project" value="GO_Central"/>
</dbReference>
<dbReference type="GO" id="GO:0045727">
    <property type="term" value="P:positive regulation of translation"/>
    <property type="evidence" value="ECO:0000318"/>
    <property type="project" value="GO_Central"/>
</dbReference>
<dbReference type="CDD" id="cd12455">
    <property type="entry name" value="RRM_like_Smg4_UPF3"/>
    <property type="match status" value="1"/>
</dbReference>
<dbReference type="Gene3D" id="3.30.70.330">
    <property type="match status" value="1"/>
</dbReference>
<dbReference type="InterPro" id="IPR012677">
    <property type="entry name" value="Nucleotide-bd_a/b_plait_sf"/>
</dbReference>
<dbReference type="InterPro" id="IPR035979">
    <property type="entry name" value="RBD_domain_sf"/>
</dbReference>
<dbReference type="InterPro" id="IPR039722">
    <property type="entry name" value="Upf3"/>
</dbReference>
<dbReference type="InterPro" id="IPR005120">
    <property type="entry name" value="UPF3_dom"/>
</dbReference>
<dbReference type="PANTHER" id="PTHR13112:SF0">
    <property type="entry name" value="FI21285P1"/>
    <property type="match status" value="1"/>
</dbReference>
<dbReference type="PANTHER" id="PTHR13112">
    <property type="entry name" value="UPF3 REGULATOR OF NONSENSE TRANSCRIPTS-LIKE PROTEIN"/>
    <property type="match status" value="1"/>
</dbReference>
<dbReference type="Pfam" id="PF03467">
    <property type="entry name" value="Smg4_UPF3"/>
    <property type="match status" value="1"/>
</dbReference>
<dbReference type="SUPFAM" id="SSF54928">
    <property type="entry name" value="RNA-binding domain, RBD"/>
    <property type="match status" value="1"/>
</dbReference>
<accession>Q10267</accession>
<accession>Q9US99</accession>
<name>UPF3_SCHPO</name>
<organism>
    <name type="scientific">Schizosaccharomyces pombe (strain 972 / ATCC 24843)</name>
    <name type="common">Fission yeast</name>
    <dbReference type="NCBI Taxonomy" id="284812"/>
    <lineage>
        <taxon>Eukaryota</taxon>
        <taxon>Fungi</taxon>
        <taxon>Dikarya</taxon>
        <taxon>Ascomycota</taxon>
        <taxon>Taphrinomycotina</taxon>
        <taxon>Schizosaccharomycetes</taxon>
        <taxon>Schizosaccharomycetales</taxon>
        <taxon>Schizosaccharomycetaceae</taxon>
        <taxon>Schizosaccharomyces</taxon>
    </lineage>
</organism>
<proteinExistence type="inferred from homology"/>
<feature type="chain" id="PRO_0000116574" description="Nonsense-mediated mRNA decay protein 3">
    <location>
        <begin position="1"/>
        <end position="278"/>
    </location>
</feature>
<feature type="region of interest" description="Disordered" evidence="2">
    <location>
        <begin position="163"/>
        <end position="278"/>
    </location>
</feature>
<feature type="compositionally biased region" description="Basic residues" evidence="2">
    <location>
        <begin position="169"/>
        <end position="182"/>
    </location>
</feature>
<feature type="compositionally biased region" description="Low complexity" evidence="2">
    <location>
        <begin position="207"/>
        <end position="216"/>
    </location>
</feature>
<feature type="compositionally biased region" description="Basic and acidic residues" evidence="2">
    <location>
        <begin position="249"/>
        <end position="259"/>
    </location>
</feature>
<feature type="compositionally biased region" description="Basic and acidic residues" evidence="2">
    <location>
        <begin position="268"/>
        <end position="278"/>
    </location>
</feature>
<sequence>MAPDISKKRLPCKVLVFNLPPTLPEQVFLQSINSFLPHVEWHRFSKGKATVGTRSELLSFAYLKFQSATAVQEFFRVYQGHTFIDKKNNTYRAIVTIAPYQKIPPSKVKADSLEGSLEQDPKFQEFKVQRESYSQTASNDDVIEKLQTSTPLLQYLAEKKNAVVEKGKSKPSKKSVKAKKKLRLAEKPASNNSKAGKSSQESKKSSKAPAESAAAVIKEDKVSDRKKSKKKPKKTPVSNSTASQASENASDKKTKEKKSSGKQKIASKKKDQLTTDNV</sequence>
<comment type="function">
    <text evidence="1">Involved in nonsense-mediated decay of mRNAs containing premature stop codons.</text>
</comment>
<comment type="subcellular location">
    <subcellularLocation>
        <location evidence="3 4">Nucleus</location>
        <location evidence="3 4">Nucleolus</location>
    </subcellularLocation>
</comment>
<comment type="similarity">
    <text evidence="5">Belongs to the RENT3 family.</text>
</comment>
<evidence type="ECO:0000250" key="1"/>
<evidence type="ECO:0000256" key="2">
    <source>
        <dbReference type="SAM" id="MobiDB-lite"/>
    </source>
</evidence>
<evidence type="ECO:0000269" key="3">
    <source>
    </source>
</evidence>
<evidence type="ECO:0000269" key="4">
    <source>
    </source>
</evidence>
<evidence type="ECO:0000305" key="5"/>
<reference key="1">
    <citation type="journal article" date="2002" name="Nature">
        <title>The genome sequence of Schizosaccharomyces pombe.</title>
        <authorList>
            <person name="Wood V."/>
            <person name="Gwilliam R."/>
            <person name="Rajandream M.A."/>
            <person name="Lyne M.H."/>
            <person name="Lyne R."/>
            <person name="Stewart A."/>
            <person name="Sgouros J.G."/>
            <person name="Peat N."/>
            <person name="Hayles J."/>
            <person name="Baker S.G."/>
            <person name="Basham D."/>
            <person name="Bowman S."/>
            <person name="Brooks K."/>
            <person name="Brown D."/>
            <person name="Brown S."/>
            <person name="Chillingworth T."/>
            <person name="Churcher C.M."/>
            <person name="Collins M."/>
            <person name="Connor R."/>
            <person name="Cronin A."/>
            <person name="Davis P."/>
            <person name="Feltwell T."/>
            <person name="Fraser A."/>
            <person name="Gentles S."/>
            <person name="Goble A."/>
            <person name="Hamlin N."/>
            <person name="Harris D.E."/>
            <person name="Hidalgo J."/>
            <person name="Hodgson G."/>
            <person name="Holroyd S."/>
            <person name="Hornsby T."/>
            <person name="Howarth S."/>
            <person name="Huckle E.J."/>
            <person name="Hunt S."/>
            <person name="Jagels K."/>
            <person name="James K.D."/>
            <person name="Jones L."/>
            <person name="Jones M."/>
            <person name="Leather S."/>
            <person name="McDonald S."/>
            <person name="McLean J."/>
            <person name="Mooney P."/>
            <person name="Moule S."/>
            <person name="Mungall K.L."/>
            <person name="Murphy L.D."/>
            <person name="Niblett D."/>
            <person name="Odell C."/>
            <person name="Oliver K."/>
            <person name="O'Neil S."/>
            <person name="Pearson D."/>
            <person name="Quail M.A."/>
            <person name="Rabbinowitsch E."/>
            <person name="Rutherford K.M."/>
            <person name="Rutter S."/>
            <person name="Saunders D."/>
            <person name="Seeger K."/>
            <person name="Sharp S."/>
            <person name="Skelton J."/>
            <person name="Simmonds M.N."/>
            <person name="Squares R."/>
            <person name="Squares S."/>
            <person name="Stevens K."/>
            <person name="Taylor K."/>
            <person name="Taylor R.G."/>
            <person name="Tivey A."/>
            <person name="Walsh S.V."/>
            <person name="Warren T."/>
            <person name="Whitehead S."/>
            <person name="Woodward J.R."/>
            <person name="Volckaert G."/>
            <person name="Aert R."/>
            <person name="Robben J."/>
            <person name="Grymonprez B."/>
            <person name="Weltjens I."/>
            <person name="Vanstreels E."/>
            <person name="Rieger M."/>
            <person name="Schaefer M."/>
            <person name="Mueller-Auer S."/>
            <person name="Gabel C."/>
            <person name="Fuchs M."/>
            <person name="Duesterhoeft A."/>
            <person name="Fritzc C."/>
            <person name="Holzer E."/>
            <person name="Moestl D."/>
            <person name="Hilbert H."/>
            <person name="Borzym K."/>
            <person name="Langer I."/>
            <person name="Beck A."/>
            <person name="Lehrach H."/>
            <person name="Reinhardt R."/>
            <person name="Pohl T.M."/>
            <person name="Eger P."/>
            <person name="Zimmermann W."/>
            <person name="Wedler H."/>
            <person name="Wambutt R."/>
            <person name="Purnelle B."/>
            <person name="Goffeau A."/>
            <person name="Cadieu E."/>
            <person name="Dreano S."/>
            <person name="Gloux S."/>
            <person name="Lelaure V."/>
            <person name="Mottier S."/>
            <person name="Galibert F."/>
            <person name="Aves S.J."/>
            <person name="Xiang Z."/>
            <person name="Hunt C."/>
            <person name="Moore K."/>
            <person name="Hurst S.M."/>
            <person name="Lucas M."/>
            <person name="Rochet M."/>
            <person name="Gaillardin C."/>
            <person name="Tallada V.A."/>
            <person name="Garzon A."/>
            <person name="Thode G."/>
            <person name="Daga R.R."/>
            <person name="Cruzado L."/>
            <person name="Jimenez J."/>
            <person name="Sanchez M."/>
            <person name="del Rey F."/>
            <person name="Benito J."/>
            <person name="Dominguez A."/>
            <person name="Revuelta J.L."/>
            <person name="Moreno S."/>
            <person name="Armstrong J."/>
            <person name="Forsburg S.L."/>
            <person name="Cerutti L."/>
            <person name="Lowe T."/>
            <person name="McCombie W.R."/>
            <person name="Paulsen I."/>
            <person name="Potashkin J."/>
            <person name="Shpakovski G.V."/>
            <person name="Ussery D."/>
            <person name="Barrell B.G."/>
            <person name="Nurse P."/>
        </authorList>
    </citation>
    <scope>NUCLEOTIDE SEQUENCE [LARGE SCALE GENOMIC DNA]</scope>
    <source>
        <strain>972 / ATCC 24843</strain>
    </source>
</reference>
<reference key="2">
    <citation type="journal article" date="2000" name="Genes Cells">
        <title>Large-scale screening of intracellular protein localization in living fission yeast cells by the use of a GFP-fusion genomic DNA library.</title>
        <authorList>
            <person name="Ding D.-Q."/>
            <person name="Tomita Y."/>
            <person name="Yamamoto A."/>
            <person name="Chikashige Y."/>
            <person name="Haraguchi T."/>
            <person name="Hiraoka Y."/>
        </authorList>
    </citation>
    <scope>NUCLEOTIDE SEQUENCE [LARGE SCALE GENOMIC DNA] OF 89-224</scope>
    <scope>SUBCELLULAR LOCATION</scope>
    <source>
        <strain>ATCC 38364 / 968</strain>
    </source>
</reference>
<reference key="3">
    <citation type="journal article" date="2006" name="Nat. Biotechnol.">
        <title>ORFeome cloning and global analysis of protein localization in the fission yeast Schizosaccharomyces pombe.</title>
        <authorList>
            <person name="Matsuyama A."/>
            <person name="Arai R."/>
            <person name="Yashiroda Y."/>
            <person name="Shirai A."/>
            <person name="Kamata A."/>
            <person name="Sekido S."/>
            <person name="Kobayashi Y."/>
            <person name="Hashimoto A."/>
            <person name="Hamamoto M."/>
            <person name="Hiraoka Y."/>
            <person name="Horinouchi S."/>
            <person name="Yoshida M."/>
        </authorList>
    </citation>
    <scope>SUBCELLULAR LOCATION [LARGE SCALE ANALYSIS]</scope>
</reference>
<gene>
    <name type="primary">upf3</name>
    <name type="ORF">SPAC13G7.03</name>
</gene>
<keyword id="KW-0866">Nonsense-mediated mRNA decay</keyword>
<keyword id="KW-0539">Nucleus</keyword>
<keyword id="KW-1185">Reference proteome</keyword>
<protein>
    <recommendedName>
        <fullName>Nonsense-mediated mRNA decay protein 3</fullName>
    </recommendedName>
    <alternativeName>
        <fullName>Up-frameshift suppressor 3</fullName>
    </alternativeName>
</protein>